<accession>Q3YAU5</accession>
<evidence type="ECO:0000250" key="1"/>
<evidence type="ECO:0000250" key="2">
    <source>
        <dbReference type="UniProtKB" id="P00630"/>
    </source>
</evidence>
<evidence type="ECO:0000250" key="3">
    <source>
        <dbReference type="UniProtKB" id="Q6T178"/>
    </source>
</evidence>
<evidence type="ECO:0000255" key="4"/>
<evidence type="ECO:0000255" key="5">
    <source>
        <dbReference type="PROSITE-ProRule" id="PRU10035"/>
    </source>
</evidence>
<evidence type="ECO:0000305" key="6"/>
<comment type="function">
    <text evidence="1">Phospholipase toxin, which catalyzes the calcium-dependent hydrolysis of the 2-acyl groups in 3-sn-phosphoglycerides. Inhibits both skeletal (RYR1) and cardiac (RYR2) ryanodine receptors (calcium release channels). Probably blocks ryanodine receptors by generating a lipid product (By similarity).</text>
</comment>
<comment type="catalytic activity">
    <reaction evidence="5">
        <text>a 1,2-diacyl-sn-glycero-3-phosphocholine + H2O = a 1-acyl-sn-glycero-3-phosphocholine + a fatty acid + H(+)</text>
        <dbReference type="Rhea" id="RHEA:15801"/>
        <dbReference type="ChEBI" id="CHEBI:15377"/>
        <dbReference type="ChEBI" id="CHEBI:15378"/>
        <dbReference type="ChEBI" id="CHEBI:28868"/>
        <dbReference type="ChEBI" id="CHEBI:57643"/>
        <dbReference type="ChEBI" id="CHEBI:58168"/>
        <dbReference type="EC" id="3.1.1.4"/>
    </reaction>
</comment>
<comment type="cofactor">
    <cofactor evidence="1">
        <name>Ca(2+)</name>
        <dbReference type="ChEBI" id="CHEBI:29108"/>
    </cofactor>
    <text evidence="1">Binds 1 Ca(2+) ion.</text>
</comment>
<comment type="subunit">
    <text evidence="1">Heterodimer composed of a large subunit and a small subunit; disulfide-linked.</text>
</comment>
<comment type="subcellular location">
    <subcellularLocation>
        <location evidence="1">Secreted</location>
    </subcellularLocation>
</comment>
<comment type="tissue specificity">
    <text>Expressed by the venom gland.</text>
</comment>
<comment type="similarity">
    <text evidence="6">Belongs to the phospholipase A2 family. Group III subfamily.</text>
</comment>
<comment type="caution">
    <text evidence="6">In contrast to other phospholipases, it lacks the typical Asp active site (Asp-&gt;Glu in position 62).</text>
</comment>
<feature type="chain" id="PRO_0000429186" description="Phospholipase A2 large subunit">
    <location>
        <begin position="1"/>
        <end position="103" status="greater than"/>
    </location>
</feature>
<feature type="active site" evidence="5">
    <location>
        <position position="33"/>
    </location>
</feature>
<feature type="binding site" evidence="2">
    <location>
        <position position="7"/>
    </location>
    <ligand>
        <name>Ca(2+)</name>
        <dbReference type="ChEBI" id="CHEBI:29108"/>
    </ligand>
</feature>
<feature type="binding site" evidence="2">
    <location>
        <position position="9"/>
    </location>
    <ligand>
        <name>Ca(2+)</name>
        <dbReference type="ChEBI" id="CHEBI:29108"/>
    </ligand>
</feature>
<feature type="binding site" evidence="2">
    <location>
        <position position="11"/>
    </location>
    <ligand>
        <name>Ca(2+)</name>
        <dbReference type="ChEBI" id="CHEBI:29108"/>
    </ligand>
</feature>
<feature type="binding site" evidence="2">
    <location>
        <position position="34"/>
    </location>
    <ligand>
        <name>Ca(2+)</name>
        <dbReference type="ChEBI" id="CHEBI:29108"/>
    </ligand>
</feature>
<feature type="glycosylation site" description="N-linked (GlcNAc...) asparagine" evidence="4">
    <location>
        <position position="16"/>
    </location>
</feature>
<feature type="disulfide bond" evidence="3">
    <location>
        <begin position="8"/>
        <end position="30"/>
    </location>
</feature>
<feature type="disulfide bond" evidence="3">
    <location>
        <begin position="29"/>
        <end position="68"/>
    </location>
</feature>
<feature type="disulfide bond" evidence="3">
    <location>
        <begin position="36"/>
        <end position="61"/>
    </location>
</feature>
<feature type="disulfide bond" evidence="3">
    <location>
        <begin position="59"/>
        <end position="96"/>
    </location>
</feature>
<feature type="disulfide bond" description="Interchain (between large and small subunits)" evidence="3">
    <location>
        <begin position="101"/>
        <end status="unknown"/>
    </location>
</feature>
<feature type="non-terminal residue">
    <location>
        <position position="103"/>
    </location>
</feature>
<organism>
    <name type="scientific">Chersonesometrus fulvipes</name>
    <name type="common">Indian black scorpion</name>
    <name type="synonym">Heterometrus fulvipes</name>
    <dbReference type="NCBI Taxonomy" id="141248"/>
    <lineage>
        <taxon>Eukaryota</taxon>
        <taxon>Metazoa</taxon>
        <taxon>Ecdysozoa</taxon>
        <taxon>Arthropoda</taxon>
        <taxon>Chelicerata</taxon>
        <taxon>Arachnida</taxon>
        <taxon>Scorpiones</taxon>
        <taxon>Iurida</taxon>
        <taxon>Scorpionoidea</taxon>
        <taxon>Scorpionidae</taxon>
        <taxon>Heterometrinae</taxon>
        <taxon>Chersonesometrus</taxon>
    </lineage>
</organism>
<sequence>TMWGTKWCGSGNKAINYTDLGYFSNLDSCCRTHDHCDNIAAGETKYGLTNEGKYTMMNCKCEATFQQCLRDVHGPLEGKAAFTIRKLYFGLYGNGCFNVQCPS</sequence>
<keyword id="KW-0106">Calcium</keyword>
<keyword id="KW-0108">Calcium channel impairing toxin</keyword>
<keyword id="KW-1015">Disulfide bond</keyword>
<keyword id="KW-0325">Glycoprotein</keyword>
<keyword id="KW-0378">Hydrolase</keyword>
<keyword id="KW-0872">Ion channel impairing toxin</keyword>
<keyword id="KW-0442">Lipid degradation</keyword>
<keyword id="KW-0443">Lipid metabolism</keyword>
<keyword id="KW-0479">Metal-binding</keyword>
<keyword id="KW-0528">Neurotoxin</keyword>
<keyword id="KW-1219">Ryanodine-sensitive calcium-release channel impairing toxin</keyword>
<keyword id="KW-0964">Secreted</keyword>
<keyword id="KW-0800">Toxin</keyword>
<keyword id="KW-0865">Zymogen</keyword>
<protein>
    <recommendedName>
        <fullName>Phospholipase A2 large subunit</fullName>
        <shortName>HfPLA2</shortName>
        <ecNumber>3.1.1.4</ecNumber>
    </recommendedName>
</protein>
<name>PA2_CHEFU</name>
<reference key="1">
    <citation type="journal article" date="2007" name="DNA Seq.">
        <title>Cloning, sequence analysis and homology modeling of a novel phospholipase A2 from Heterometrus fulvipes (Indian black scorpion).</title>
        <authorList>
            <person name="Hariprasad G."/>
            <person name="Singh B."/>
            <person name="Das U."/>
            <person name="Ethayathulla A.S."/>
            <person name="Kaur P."/>
            <person name="Singh T.P."/>
            <person name="Srinivasan A."/>
        </authorList>
    </citation>
    <scope>NUCLEOTIDE SEQUENCE [MRNA]</scope>
    <scope>3D-STRUCTURE MODELING</scope>
    <source>
        <tissue>Venom gland</tissue>
    </source>
</reference>
<proteinExistence type="evidence at transcript level"/>
<dbReference type="EC" id="3.1.1.4"/>
<dbReference type="EMBL" id="DQ146998">
    <property type="protein sequence ID" value="AAZ78243.1"/>
    <property type="molecule type" value="mRNA"/>
</dbReference>
<dbReference type="SMR" id="Q3YAU5"/>
<dbReference type="GO" id="GO:0005576">
    <property type="term" value="C:extracellular region"/>
    <property type="evidence" value="ECO:0007669"/>
    <property type="project" value="UniProtKB-SubCell"/>
</dbReference>
<dbReference type="GO" id="GO:0005246">
    <property type="term" value="F:calcium channel regulator activity"/>
    <property type="evidence" value="ECO:0007669"/>
    <property type="project" value="UniProtKB-KW"/>
</dbReference>
<dbReference type="GO" id="GO:0046872">
    <property type="term" value="F:metal ion binding"/>
    <property type="evidence" value="ECO:0007669"/>
    <property type="project" value="UniProtKB-KW"/>
</dbReference>
<dbReference type="GO" id="GO:0004623">
    <property type="term" value="F:phospholipase A2 activity"/>
    <property type="evidence" value="ECO:0007669"/>
    <property type="project" value="UniProtKB-EC"/>
</dbReference>
<dbReference type="GO" id="GO:0090729">
    <property type="term" value="F:toxin activity"/>
    <property type="evidence" value="ECO:0007669"/>
    <property type="project" value="UniProtKB-KW"/>
</dbReference>
<dbReference type="GO" id="GO:0050482">
    <property type="term" value="P:arachidonate secretion"/>
    <property type="evidence" value="ECO:0007669"/>
    <property type="project" value="InterPro"/>
</dbReference>
<dbReference type="GO" id="GO:0016042">
    <property type="term" value="P:lipid catabolic process"/>
    <property type="evidence" value="ECO:0007669"/>
    <property type="project" value="UniProtKB-KW"/>
</dbReference>
<dbReference type="GO" id="GO:0006644">
    <property type="term" value="P:phospholipid metabolic process"/>
    <property type="evidence" value="ECO:0007669"/>
    <property type="project" value="InterPro"/>
</dbReference>
<dbReference type="Gene3D" id="1.20.90.10">
    <property type="entry name" value="Phospholipase A2 domain"/>
    <property type="match status" value="1"/>
</dbReference>
<dbReference type="InterPro" id="IPR016090">
    <property type="entry name" value="PLipase_A2_dom"/>
</dbReference>
<dbReference type="InterPro" id="IPR036444">
    <property type="entry name" value="PLipase_A2_dom_sf"/>
</dbReference>
<dbReference type="InterPro" id="IPR033113">
    <property type="entry name" value="PLipase_A2_His_AS"/>
</dbReference>
<dbReference type="PANTHER" id="PTHR12253">
    <property type="entry name" value="RH14732P"/>
    <property type="match status" value="1"/>
</dbReference>
<dbReference type="Pfam" id="PF05826">
    <property type="entry name" value="Phospholip_A2_2"/>
    <property type="match status" value="1"/>
</dbReference>
<dbReference type="SUPFAM" id="SSF48619">
    <property type="entry name" value="Phospholipase A2, PLA2"/>
    <property type="match status" value="1"/>
</dbReference>
<dbReference type="PROSITE" id="PS00118">
    <property type="entry name" value="PA2_HIS"/>
    <property type="match status" value="1"/>
</dbReference>